<accession>Q6TND4</accession>
<geneLocation type="chloroplast"/>
<keyword id="KW-0150">Chloroplast</keyword>
<keyword id="KW-0507">mRNA processing</keyword>
<keyword id="KW-0934">Plastid</keyword>
<keyword id="KW-0694">RNA-binding</keyword>
<keyword id="KW-0819">tRNA processing</keyword>
<reference key="1">
    <citation type="journal article" date="2004" name="Am. J. Bot.">
        <title>Phylogeny of Amorpheae (Fabaceae: Pailionoideae).</title>
        <authorList>
            <person name="McMahon M."/>
            <person name="Hufford L."/>
        </authorList>
        <dbReference type="AGRICOLA" id="IND43644443"/>
    </citation>
    <scope>NUCLEOTIDE SEQUENCE [GENOMIC DNA]</scope>
</reference>
<proteinExistence type="inferred from homology"/>
<evidence type="ECO:0000255" key="1">
    <source>
        <dbReference type="HAMAP-Rule" id="MF_01390"/>
    </source>
</evidence>
<comment type="function">
    <text evidence="1">Usually encoded in the trnK tRNA gene intron. Probably assists in splicing its own and other chloroplast group II introns.</text>
</comment>
<comment type="subcellular location">
    <subcellularLocation>
        <location>Plastid</location>
        <location>Chloroplast</location>
    </subcellularLocation>
</comment>
<comment type="similarity">
    <text evidence="1">Belongs to the intron maturase 2 family. MatK subfamily.</text>
</comment>
<sequence length="509" mass="60785">MEEYQVYLELDRSRQQDFLYPFIFQEYIYGLVYGHDLNGSILVENVDYDNKSSLLIVKRLITRMYQQNHLIVSSNDFNKNQQFWGYNKNLYSQIISEAFAIVVEIPFYSQLRSSLEGAEVIKSYNKLRSIHAIFPFFEDKFTYLNYVSDVQIPYPIHLEILVQILRYWVKDPPLFHLLRSFLYQYCNWNSFINPKKSISSFSKSNPRFFFFLYNFYVCEYESIFLFLRKKSSHLRLTSFSVLFERIYFYAKIEHLVEVFPKDFLSTLSLFKDPLIHYVRYQGKSILASKNAPLLMNKWKYYLISLWQCYFNVWSQPGTIYINQLSDHSFHFFWGGYFSNVRLNLSVVRSQMLENSFLIEIVMKKLDTIVPIIPIIRSLAKAKFCNVLGHPISKPVWADLSDFGIIDRFLRIRRKISQYYNGSSKKKSLYRIKYILRLSCIKTLVRKHKSTVRAFLKRLGSEELLKEFFTEEEDILSLIFPRASSTLQRLYGGRIWYLDIIFSNDLVNHS</sequence>
<gene>
    <name evidence="1" type="primary">matK</name>
</gene>
<protein>
    <recommendedName>
        <fullName evidence="1">Maturase K</fullName>
    </recommendedName>
    <alternativeName>
        <fullName evidence="1">Intron maturase</fullName>
    </alternativeName>
</protein>
<organism>
    <name type="scientific">Dalea purpurea</name>
    <name type="common">Violet prairie clover</name>
    <dbReference type="NCBI Taxonomy" id="248511"/>
    <lineage>
        <taxon>Eukaryota</taxon>
        <taxon>Viridiplantae</taxon>
        <taxon>Streptophyta</taxon>
        <taxon>Embryophyta</taxon>
        <taxon>Tracheophyta</taxon>
        <taxon>Spermatophyta</taxon>
        <taxon>Magnoliopsida</taxon>
        <taxon>eudicotyledons</taxon>
        <taxon>Gunneridae</taxon>
        <taxon>Pentapetalae</taxon>
        <taxon>rosids</taxon>
        <taxon>fabids</taxon>
        <taxon>Fabales</taxon>
        <taxon>Fabaceae</taxon>
        <taxon>Papilionoideae</taxon>
        <taxon>50 kb inversion clade</taxon>
        <taxon>dalbergioids sensu lato</taxon>
        <taxon>Amorpheae</taxon>
        <taxon>Dalea</taxon>
    </lineage>
</organism>
<name>MATK_DALPU</name>
<dbReference type="EMBL" id="AY391798">
    <property type="protein sequence ID" value="AAR18928.1"/>
    <property type="molecule type" value="Genomic_DNA"/>
</dbReference>
<dbReference type="GO" id="GO:0009507">
    <property type="term" value="C:chloroplast"/>
    <property type="evidence" value="ECO:0007669"/>
    <property type="project" value="UniProtKB-SubCell"/>
</dbReference>
<dbReference type="GO" id="GO:0003723">
    <property type="term" value="F:RNA binding"/>
    <property type="evidence" value="ECO:0007669"/>
    <property type="project" value="UniProtKB-KW"/>
</dbReference>
<dbReference type="GO" id="GO:0006397">
    <property type="term" value="P:mRNA processing"/>
    <property type="evidence" value="ECO:0007669"/>
    <property type="project" value="UniProtKB-KW"/>
</dbReference>
<dbReference type="GO" id="GO:0008380">
    <property type="term" value="P:RNA splicing"/>
    <property type="evidence" value="ECO:0007669"/>
    <property type="project" value="UniProtKB-UniRule"/>
</dbReference>
<dbReference type="GO" id="GO:0008033">
    <property type="term" value="P:tRNA processing"/>
    <property type="evidence" value="ECO:0007669"/>
    <property type="project" value="UniProtKB-KW"/>
</dbReference>
<dbReference type="HAMAP" id="MF_01390">
    <property type="entry name" value="MatK"/>
    <property type="match status" value="1"/>
</dbReference>
<dbReference type="InterPro" id="IPR024937">
    <property type="entry name" value="Domain_X"/>
</dbReference>
<dbReference type="InterPro" id="IPR002866">
    <property type="entry name" value="Maturase_MatK"/>
</dbReference>
<dbReference type="InterPro" id="IPR024942">
    <property type="entry name" value="Maturase_MatK_N"/>
</dbReference>
<dbReference type="PANTHER" id="PTHR34811">
    <property type="entry name" value="MATURASE K"/>
    <property type="match status" value="1"/>
</dbReference>
<dbReference type="PANTHER" id="PTHR34811:SF1">
    <property type="entry name" value="MATURASE K"/>
    <property type="match status" value="1"/>
</dbReference>
<dbReference type="Pfam" id="PF01348">
    <property type="entry name" value="Intron_maturas2"/>
    <property type="match status" value="1"/>
</dbReference>
<dbReference type="Pfam" id="PF01824">
    <property type="entry name" value="MatK_N"/>
    <property type="match status" value="1"/>
</dbReference>
<feature type="chain" id="PRO_0000143355" description="Maturase K">
    <location>
        <begin position="1"/>
        <end position="509"/>
    </location>
</feature>